<feature type="signal peptide" evidence="1">
    <location>
        <begin position="1"/>
        <end position="23"/>
    </location>
</feature>
<feature type="propeptide" id="PRO_0000429250" evidence="3">
    <location>
        <begin position="24"/>
        <end position="50"/>
    </location>
</feature>
<feature type="peptide" id="PRO_0000429251" description="U1-theraphotoxin-Ap1a" evidence="3">
    <location>
        <begin position="51"/>
        <end position="98"/>
    </location>
</feature>
<feature type="region of interest" description="Disordered" evidence="2">
    <location>
        <begin position="63"/>
        <end position="84"/>
    </location>
</feature>
<feature type="disulfide bond" evidence="3">
    <location>
        <begin position="54"/>
        <end position="84"/>
    </location>
</feature>
<feature type="disulfide bond" evidence="3">
    <location>
        <begin position="58"/>
        <end position="90"/>
    </location>
</feature>
<feature type="disulfide bond" evidence="3">
    <location>
        <begin position="72"/>
        <end position="95"/>
    </location>
</feature>
<accession>B3EWY4</accession>
<organism>
    <name type="scientific">Acanthoscurria paulensis</name>
    <name type="common">Brazilian giant black tarantula spider</name>
    <dbReference type="NCBI Taxonomy" id="1264770"/>
    <lineage>
        <taxon>Eukaryota</taxon>
        <taxon>Metazoa</taxon>
        <taxon>Ecdysozoa</taxon>
        <taxon>Arthropoda</taxon>
        <taxon>Chelicerata</taxon>
        <taxon>Arachnida</taxon>
        <taxon>Araneae</taxon>
        <taxon>Mygalomorphae</taxon>
        <taxon>Theraphosidae</taxon>
        <taxon>Acanthoscurria</taxon>
    </lineage>
</organism>
<comment type="function">
    <text evidence="3">Is toxic to both insects and mammals. Induces reversible paralysis when injected into S.frugiperda larvae. Reduces both the amplitude and frequency of responses from muscle (GF-TTM and GF-DLM) pathways in the D.melanogaster giant fiber circuit, suggesting an action at the neuromuscular junction, which is mediated by glutamatergic receptors. In mice, intracranial injection of 30 ug causes increased urination, myoclonus, hypermotility with circular movements followed by respiratory and generalized seizures resulting in death within 25-35 minutes of injection.</text>
</comment>
<comment type="subcellular location">
    <subcellularLocation>
        <location evidence="3">Secreted</location>
    </subcellularLocation>
</comment>
<comment type="tissue specificity">
    <text evidence="6">Expressed by the venom gland.</text>
</comment>
<comment type="mass spectrometry"/>
<comment type="toxic dose">
    <text evidence="3">PD(50) is 13 ug/g in insect larvae (S.frugiperda) (at 8 hours post-injection).</text>
</comment>
<comment type="miscellaneous">
    <text>Negative results: has no effect on human Nav1.2/SCN2A, Nav1.4/SCN4A, Nav1.5/SCN5A or Nav1.6/SCN8A voltage-gated potassium channels (at 1 uM). Does not alter the response induced by acetylcholine in a rhabdomyosarcoma cell preparation (at 1 uM).</text>
</comment>
<comment type="similarity">
    <text evidence="5">Belongs to the neurotoxin 12 (Hwtx-2) family. 01 (Ap1a) subfamily.</text>
</comment>
<name>TXA1_ACAPA</name>
<dbReference type="GO" id="GO:0005576">
    <property type="term" value="C:extracellular region"/>
    <property type="evidence" value="ECO:0007669"/>
    <property type="project" value="UniProtKB-SubCell"/>
</dbReference>
<dbReference type="GO" id="GO:0090729">
    <property type="term" value="F:toxin activity"/>
    <property type="evidence" value="ECO:0007669"/>
    <property type="project" value="UniProtKB-KW"/>
</dbReference>
<dbReference type="InterPro" id="IPR012625">
    <property type="entry name" value="Hwtx-2-like"/>
</dbReference>
<dbReference type="Pfam" id="PF08089">
    <property type="entry name" value="Toxin_20"/>
    <property type="match status" value="1"/>
</dbReference>
<dbReference type="SUPFAM" id="SSF57059">
    <property type="entry name" value="omega toxin-like"/>
    <property type="match status" value="1"/>
</dbReference>
<reference key="1">
    <citation type="journal article" date="2013" name="Biochemistry">
        <title>Characterization of a novel peptide toxin from Acanthoscurria paulensis spider venom: a distinct cysteine assignment to the HWTX-II family.</title>
        <authorList>
            <person name="Mourao C.B."/>
            <person name="Heghinian M.D."/>
            <person name="Barbosa E.A."/>
            <person name="Mari F."/>
            <person name="Bloch C. Jr."/>
            <person name="Restano-Cassulini R."/>
            <person name="Possani L.D."/>
            <person name="Schwartz E.F."/>
        </authorList>
    </citation>
    <scope>NUCLEOTIDE SEQUENCE [MRNA]</scope>
    <scope>PROTEIN SEQUENCE OF 51-98</scope>
    <scope>FUNCTION</scope>
    <scope>SUBCELLULAR LOCATION</scope>
    <scope>MASS SPECTROMETRY</scope>
    <scope>TOXIC DOSE</scope>
    <scope>DISULFIDE BONDS</scope>
    <source>
        <tissue>Venom</tissue>
        <tissue>Venom gland</tissue>
    </source>
</reference>
<keyword id="KW-0903">Direct protein sequencing</keyword>
<keyword id="KW-1015">Disulfide bond</keyword>
<keyword id="KW-0528">Neurotoxin</keyword>
<keyword id="KW-0964">Secreted</keyword>
<keyword id="KW-0732">Signal</keyword>
<keyword id="KW-0800">Toxin</keyword>
<evidence type="ECO:0000255" key="1"/>
<evidence type="ECO:0000256" key="2">
    <source>
        <dbReference type="SAM" id="MobiDB-lite"/>
    </source>
</evidence>
<evidence type="ECO:0000269" key="3">
    <source>
    </source>
</evidence>
<evidence type="ECO:0000303" key="4">
    <source>
    </source>
</evidence>
<evidence type="ECO:0000305" key="5"/>
<evidence type="ECO:0000305" key="6">
    <source>
    </source>
</evidence>
<sequence>MRSLTLAAVLACSLLLVFHTSAAEELEVQDGHLMNPGDGDTALATVDDERIIECFFSCEIEKDGKSKEGKPCKPKGDKNKDKKCSGGWRCKIKMCLKI</sequence>
<proteinExistence type="evidence at protein level"/>
<protein>
    <recommendedName>
        <fullName evidence="4">U1-theraphotoxin-Ap1a</fullName>
        <shortName evidence="4">U1-TRTX-Ap1a</shortName>
    </recommendedName>
</protein>